<protein>
    <recommendedName>
        <fullName evidence="1">tRNA dimethylallyltransferase</fullName>
        <ecNumber evidence="1">2.5.1.75</ecNumber>
    </recommendedName>
    <alternativeName>
        <fullName evidence="1">Dimethylallyl diphosphate:tRNA dimethylallyltransferase</fullName>
        <shortName evidence="1">DMAPP:tRNA dimethylallyltransferase</shortName>
        <shortName evidence="1">DMATase</shortName>
    </alternativeName>
    <alternativeName>
        <fullName evidence="1">Isopentenyl-diphosphate:tRNA isopentenyltransferase</fullName>
        <shortName evidence="1">IPP transferase</shortName>
        <shortName evidence="1">IPPT</shortName>
        <shortName evidence="1">IPTase</shortName>
    </alternativeName>
</protein>
<organism>
    <name type="scientific">Marinobacter nauticus (strain ATCC 700491 / DSM 11845 / VT8)</name>
    <name type="common">Marinobacter aquaeolei</name>
    <dbReference type="NCBI Taxonomy" id="351348"/>
    <lineage>
        <taxon>Bacteria</taxon>
        <taxon>Pseudomonadati</taxon>
        <taxon>Pseudomonadota</taxon>
        <taxon>Gammaproteobacteria</taxon>
        <taxon>Pseudomonadales</taxon>
        <taxon>Marinobacteraceae</taxon>
        <taxon>Marinobacter</taxon>
    </lineage>
</organism>
<sequence>MIPDNRSQQGSLPPTIFLMGPTASGKTDLAIELCRTLPCEIISVDSAMVYRGMDIGTAKPSPEELALAPHRLIDICDPADTYSAADFRRDALAAMSEISGRGRIPLLVGGTMMYFKALLHGMSNLPSANQALRAEIEREAERDGWGALHEELAEKDPDAARLIHPNNRQRLMRAIEVIRLTDKPISSFWQSESGTSGQHPQSGIEDYTYFTSWQADESAGLPYTVFQFALAPAERSVLHSRIQKRFLAMLEAGFLDEVRALMARGDLSPDLPSMRCVGYRQAWDYLSGNEDYDSFVAKGVAATRQLAKRQLTWLRKWRDVHWLDSADPQVVLDTLKKSGLHTTFNFE</sequence>
<evidence type="ECO:0000255" key="1">
    <source>
        <dbReference type="HAMAP-Rule" id="MF_00185"/>
    </source>
</evidence>
<name>MIAA_MARN8</name>
<accession>A1U4C6</accession>
<reference key="1">
    <citation type="journal article" date="2011" name="Appl. Environ. Microbiol.">
        <title>Genomic potential of Marinobacter aquaeolei, a biogeochemical 'opportunitroph'.</title>
        <authorList>
            <person name="Singer E."/>
            <person name="Webb E.A."/>
            <person name="Nelson W.C."/>
            <person name="Heidelberg J.F."/>
            <person name="Ivanova N."/>
            <person name="Pati A."/>
            <person name="Edwards K.J."/>
        </authorList>
    </citation>
    <scope>NUCLEOTIDE SEQUENCE [LARGE SCALE GENOMIC DNA]</scope>
    <source>
        <strain>ATCC 700491 / DSM 11845 / VT8</strain>
    </source>
</reference>
<comment type="function">
    <text evidence="1">Catalyzes the transfer of a dimethylallyl group onto the adenine at position 37 in tRNAs that read codons beginning with uridine, leading to the formation of N6-(dimethylallyl)adenosine (i(6)A).</text>
</comment>
<comment type="catalytic activity">
    <reaction evidence="1">
        <text>adenosine(37) in tRNA + dimethylallyl diphosphate = N(6)-dimethylallyladenosine(37) in tRNA + diphosphate</text>
        <dbReference type="Rhea" id="RHEA:26482"/>
        <dbReference type="Rhea" id="RHEA-COMP:10162"/>
        <dbReference type="Rhea" id="RHEA-COMP:10375"/>
        <dbReference type="ChEBI" id="CHEBI:33019"/>
        <dbReference type="ChEBI" id="CHEBI:57623"/>
        <dbReference type="ChEBI" id="CHEBI:74411"/>
        <dbReference type="ChEBI" id="CHEBI:74415"/>
        <dbReference type="EC" id="2.5.1.75"/>
    </reaction>
</comment>
<comment type="cofactor">
    <cofactor evidence="1">
        <name>Mg(2+)</name>
        <dbReference type="ChEBI" id="CHEBI:18420"/>
    </cofactor>
</comment>
<comment type="subunit">
    <text evidence="1">Monomer.</text>
</comment>
<comment type="similarity">
    <text evidence="1">Belongs to the IPP transferase family.</text>
</comment>
<keyword id="KW-0067">ATP-binding</keyword>
<keyword id="KW-0460">Magnesium</keyword>
<keyword id="KW-0547">Nucleotide-binding</keyword>
<keyword id="KW-0808">Transferase</keyword>
<keyword id="KW-0819">tRNA processing</keyword>
<dbReference type="EC" id="2.5.1.75" evidence="1"/>
<dbReference type="EMBL" id="CP000514">
    <property type="protein sequence ID" value="ABM19845.1"/>
    <property type="molecule type" value="Genomic_DNA"/>
</dbReference>
<dbReference type="SMR" id="A1U4C6"/>
<dbReference type="STRING" id="351348.Maqu_2770"/>
<dbReference type="KEGG" id="maq:Maqu_2770"/>
<dbReference type="eggNOG" id="COG0324">
    <property type="taxonomic scope" value="Bacteria"/>
</dbReference>
<dbReference type="HOGENOM" id="CLU_032616_0_0_6"/>
<dbReference type="OrthoDB" id="9776390at2"/>
<dbReference type="Proteomes" id="UP000000998">
    <property type="component" value="Chromosome"/>
</dbReference>
<dbReference type="GO" id="GO:0005524">
    <property type="term" value="F:ATP binding"/>
    <property type="evidence" value="ECO:0007669"/>
    <property type="project" value="UniProtKB-UniRule"/>
</dbReference>
<dbReference type="GO" id="GO:0052381">
    <property type="term" value="F:tRNA dimethylallyltransferase activity"/>
    <property type="evidence" value="ECO:0007669"/>
    <property type="project" value="UniProtKB-UniRule"/>
</dbReference>
<dbReference type="GO" id="GO:0006400">
    <property type="term" value="P:tRNA modification"/>
    <property type="evidence" value="ECO:0007669"/>
    <property type="project" value="TreeGrafter"/>
</dbReference>
<dbReference type="FunFam" id="1.10.20.140:FF:000001">
    <property type="entry name" value="tRNA dimethylallyltransferase"/>
    <property type="match status" value="1"/>
</dbReference>
<dbReference type="Gene3D" id="1.10.20.140">
    <property type="match status" value="1"/>
</dbReference>
<dbReference type="Gene3D" id="3.40.50.300">
    <property type="entry name" value="P-loop containing nucleotide triphosphate hydrolases"/>
    <property type="match status" value="1"/>
</dbReference>
<dbReference type="HAMAP" id="MF_00185">
    <property type="entry name" value="IPP_trans"/>
    <property type="match status" value="1"/>
</dbReference>
<dbReference type="InterPro" id="IPR039657">
    <property type="entry name" value="Dimethylallyltransferase"/>
</dbReference>
<dbReference type="InterPro" id="IPR018022">
    <property type="entry name" value="IPT"/>
</dbReference>
<dbReference type="InterPro" id="IPR027417">
    <property type="entry name" value="P-loop_NTPase"/>
</dbReference>
<dbReference type="NCBIfam" id="TIGR00174">
    <property type="entry name" value="miaA"/>
    <property type="match status" value="1"/>
</dbReference>
<dbReference type="PANTHER" id="PTHR11088">
    <property type="entry name" value="TRNA DIMETHYLALLYLTRANSFERASE"/>
    <property type="match status" value="1"/>
</dbReference>
<dbReference type="PANTHER" id="PTHR11088:SF60">
    <property type="entry name" value="TRNA DIMETHYLALLYLTRANSFERASE"/>
    <property type="match status" value="1"/>
</dbReference>
<dbReference type="Pfam" id="PF01715">
    <property type="entry name" value="IPPT"/>
    <property type="match status" value="1"/>
</dbReference>
<dbReference type="SUPFAM" id="SSF52540">
    <property type="entry name" value="P-loop containing nucleoside triphosphate hydrolases"/>
    <property type="match status" value="1"/>
</dbReference>
<gene>
    <name evidence="1" type="primary">miaA</name>
    <name type="ordered locus">Maqu_2770</name>
</gene>
<feature type="chain" id="PRO_0000377214" description="tRNA dimethylallyltransferase">
    <location>
        <begin position="1"/>
        <end position="347"/>
    </location>
</feature>
<feature type="region of interest" description="Interaction with substrate tRNA" evidence="1">
    <location>
        <begin position="45"/>
        <end position="48"/>
    </location>
</feature>
<feature type="region of interest" description="Interaction with substrate tRNA" evidence="1">
    <location>
        <begin position="169"/>
        <end position="173"/>
    </location>
</feature>
<feature type="region of interest" description="Interaction with substrate tRNA" evidence="1">
    <location>
        <begin position="275"/>
        <end position="280"/>
    </location>
</feature>
<feature type="binding site" evidence="1">
    <location>
        <begin position="20"/>
        <end position="27"/>
    </location>
    <ligand>
        <name>ATP</name>
        <dbReference type="ChEBI" id="CHEBI:30616"/>
    </ligand>
</feature>
<feature type="binding site" evidence="1">
    <location>
        <begin position="22"/>
        <end position="27"/>
    </location>
    <ligand>
        <name>substrate</name>
    </ligand>
</feature>
<feature type="site" description="Interaction with substrate tRNA" evidence="1">
    <location>
        <position position="111"/>
    </location>
</feature>
<feature type="site" description="Interaction with substrate tRNA" evidence="1">
    <location>
        <position position="133"/>
    </location>
</feature>
<proteinExistence type="inferred from homology"/>